<comment type="subcellular location">
    <subcellularLocation>
        <location evidence="2">Cell membrane</location>
        <topology evidence="2">Multi-pass membrane protein</topology>
    </subcellularLocation>
</comment>
<protein>
    <recommendedName>
        <fullName>Uncharacterized membrane protein YvoD</fullName>
    </recommendedName>
</protein>
<dbReference type="EMBL" id="U63310">
    <property type="protein sequence ID" value="AAD09502.1"/>
    <property type="molecule type" value="Genomic_DNA"/>
</dbReference>
<dbReference type="EMBL" id="AF017113">
    <property type="protein sequence ID" value="AAC67288.1"/>
    <property type="molecule type" value="Genomic_DNA"/>
</dbReference>
<dbReference type="EMBL" id="AL009126">
    <property type="protein sequence ID" value="CAB15503.1"/>
    <property type="molecule type" value="Genomic_DNA"/>
</dbReference>
<dbReference type="PIR" id="F70044">
    <property type="entry name" value="F70044"/>
</dbReference>
<dbReference type="RefSeq" id="NP_391378.1">
    <property type="nucleotide sequence ID" value="NC_000964.3"/>
</dbReference>
<dbReference type="RefSeq" id="WP_003243723.1">
    <property type="nucleotide sequence ID" value="NZ_OZ025638.1"/>
</dbReference>
<dbReference type="FunCoup" id="O34382">
    <property type="interactions" value="11"/>
</dbReference>
<dbReference type="STRING" id="224308.BSU34980"/>
<dbReference type="PaxDb" id="224308-BSU34980"/>
<dbReference type="EnsemblBacteria" id="CAB15503">
    <property type="protein sequence ID" value="CAB15503"/>
    <property type="gene ID" value="BSU_34980"/>
</dbReference>
<dbReference type="GeneID" id="936603"/>
<dbReference type="KEGG" id="bsu:BSU34980"/>
<dbReference type="PATRIC" id="fig|224308.179.peg.3786"/>
<dbReference type="eggNOG" id="COG0370">
    <property type="taxonomic scope" value="Bacteria"/>
</dbReference>
<dbReference type="InParanoid" id="O34382"/>
<dbReference type="OrthoDB" id="9779080at2"/>
<dbReference type="PhylomeDB" id="O34382"/>
<dbReference type="BioCyc" id="BSUB:BSU34980-MONOMER"/>
<dbReference type="Proteomes" id="UP000001570">
    <property type="component" value="Chromosome"/>
</dbReference>
<dbReference type="GO" id="GO:0005886">
    <property type="term" value="C:plasma membrane"/>
    <property type="evidence" value="ECO:0007669"/>
    <property type="project" value="UniProtKB-SubCell"/>
</dbReference>
<dbReference type="InterPro" id="IPR011642">
    <property type="entry name" value="Gate_dom"/>
</dbReference>
<dbReference type="Pfam" id="PF07670">
    <property type="entry name" value="Gate"/>
    <property type="match status" value="2"/>
</dbReference>
<gene>
    <name type="primary">yvoD</name>
    <name type="ordered locus">BSU34980</name>
</gene>
<accession>O34382</accession>
<accession>Q795F0</accession>
<accession>Q9R9E1</accession>
<organism>
    <name type="scientific">Bacillus subtilis (strain 168)</name>
    <dbReference type="NCBI Taxonomy" id="224308"/>
    <lineage>
        <taxon>Bacteria</taxon>
        <taxon>Bacillati</taxon>
        <taxon>Bacillota</taxon>
        <taxon>Bacilli</taxon>
        <taxon>Bacillales</taxon>
        <taxon>Bacillaceae</taxon>
        <taxon>Bacillus</taxon>
    </lineage>
</organism>
<keyword id="KW-1003">Cell membrane</keyword>
<keyword id="KW-0472">Membrane</keyword>
<keyword id="KW-1185">Reference proteome</keyword>
<keyword id="KW-0812">Transmembrane</keyword>
<keyword id="KW-1133">Transmembrane helix</keyword>
<name>YVOD_BACSU</name>
<evidence type="ECO:0000255" key="1"/>
<evidence type="ECO:0000305" key="2"/>
<reference key="1">
    <citation type="submission" date="1996-07" db="EMBL/GenBank/DDBJ databases">
        <authorList>
            <person name="Dartois V.A."/>
            <person name="Hoch J.A."/>
        </authorList>
    </citation>
    <scope>NUCLEOTIDE SEQUENCE [GENOMIC DNA]</scope>
    <source>
        <strain>168</strain>
    </source>
</reference>
<reference key="2">
    <citation type="submission" date="1997-11" db="EMBL/GenBank/DDBJ databases">
        <title>Nucleotide sequence of the 300-304 chromosomal segment of Bacillus subtilis.</title>
        <authorList>
            <person name="Lazarevic V."/>
            <person name="Soldo B."/>
            <person name="Rivolta C."/>
            <person name="Reynolds S."/>
            <person name="Mauel C."/>
            <person name="Karamata D."/>
        </authorList>
    </citation>
    <scope>NUCLEOTIDE SEQUENCE [GENOMIC DNA]</scope>
</reference>
<reference key="3">
    <citation type="journal article" date="1997" name="Nature">
        <title>The complete genome sequence of the Gram-positive bacterium Bacillus subtilis.</title>
        <authorList>
            <person name="Kunst F."/>
            <person name="Ogasawara N."/>
            <person name="Moszer I."/>
            <person name="Albertini A.M."/>
            <person name="Alloni G."/>
            <person name="Azevedo V."/>
            <person name="Bertero M.G."/>
            <person name="Bessieres P."/>
            <person name="Bolotin A."/>
            <person name="Borchert S."/>
            <person name="Borriss R."/>
            <person name="Boursier L."/>
            <person name="Brans A."/>
            <person name="Braun M."/>
            <person name="Brignell S.C."/>
            <person name="Bron S."/>
            <person name="Brouillet S."/>
            <person name="Bruschi C.V."/>
            <person name="Caldwell B."/>
            <person name="Capuano V."/>
            <person name="Carter N.M."/>
            <person name="Choi S.-K."/>
            <person name="Codani J.-J."/>
            <person name="Connerton I.F."/>
            <person name="Cummings N.J."/>
            <person name="Daniel R.A."/>
            <person name="Denizot F."/>
            <person name="Devine K.M."/>
            <person name="Duesterhoeft A."/>
            <person name="Ehrlich S.D."/>
            <person name="Emmerson P.T."/>
            <person name="Entian K.-D."/>
            <person name="Errington J."/>
            <person name="Fabret C."/>
            <person name="Ferrari E."/>
            <person name="Foulger D."/>
            <person name="Fritz C."/>
            <person name="Fujita M."/>
            <person name="Fujita Y."/>
            <person name="Fuma S."/>
            <person name="Galizzi A."/>
            <person name="Galleron N."/>
            <person name="Ghim S.-Y."/>
            <person name="Glaser P."/>
            <person name="Goffeau A."/>
            <person name="Golightly E.J."/>
            <person name="Grandi G."/>
            <person name="Guiseppi G."/>
            <person name="Guy B.J."/>
            <person name="Haga K."/>
            <person name="Haiech J."/>
            <person name="Harwood C.R."/>
            <person name="Henaut A."/>
            <person name="Hilbert H."/>
            <person name="Holsappel S."/>
            <person name="Hosono S."/>
            <person name="Hullo M.-F."/>
            <person name="Itaya M."/>
            <person name="Jones L.-M."/>
            <person name="Joris B."/>
            <person name="Karamata D."/>
            <person name="Kasahara Y."/>
            <person name="Klaerr-Blanchard M."/>
            <person name="Klein C."/>
            <person name="Kobayashi Y."/>
            <person name="Koetter P."/>
            <person name="Koningstein G."/>
            <person name="Krogh S."/>
            <person name="Kumano M."/>
            <person name="Kurita K."/>
            <person name="Lapidus A."/>
            <person name="Lardinois S."/>
            <person name="Lauber J."/>
            <person name="Lazarevic V."/>
            <person name="Lee S.-M."/>
            <person name="Levine A."/>
            <person name="Liu H."/>
            <person name="Masuda S."/>
            <person name="Mauel C."/>
            <person name="Medigue C."/>
            <person name="Medina N."/>
            <person name="Mellado R.P."/>
            <person name="Mizuno M."/>
            <person name="Moestl D."/>
            <person name="Nakai S."/>
            <person name="Noback M."/>
            <person name="Noone D."/>
            <person name="O'Reilly M."/>
            <person name="Ogawa K."/>
            <person name="Ogiwara A."/>
            <person name="Oudega B."/>
            <person name="Park S.-H."/>
            <person name="Parro V."/>
            <person name="Pohl T.M."/>
            <person name="Portetelle D."/>
            <person name="Porwollik S."/>
            <person name="Prescott A.M."/>
            <person name="Presecan E."/>
            <person name="Pujic P."/>
            <person name="Purnelle B."/>
            <person name="Rapoport G."/>
            <person name="Rey M."/>
            <person name="Reynolds S."/>
            <person name="Rieger M."/>
            <person name="Rivolta C."/>
            <person name="Rocha E."/>
            <person name="Roche B."/>
            <person name="Rose M."/>
            <person name="Sadaie Y."/>
            <person name="Sato T."/>
            <person name="Scanlan E."/>
            <person name="Schleich S."/>
            <person name="Schroeter R."/>
            <person name="Scoffone F."/>
            <person name="Sekiguchi J."/>
            <person name="Sekowska A."/>
            <person name="Seror S.J."/>
            <person name="Serror P."/>
            <person name="Shin B.-S."/>
            <person name="Soldo B."/>
            <person name="Sorokin A."/>
            <person name="Tacconi E."/>
            <person name="Takagi T."/>
            <person name="Takahashi H."/>
            <person name="Takemaru K."/>
            <person name="Takeuchi M."/>
            <person name="Tamakoshi A."/>
            <person name="Tanaka T."/>
            <person name="Terpstra P."/>
            <person name="Tognoni A."/>
            <person name="Tosato V."/>
            <person name="Uchiyama S."/>
            <person name="Vandenbol M."/>
            <person name="Vannier F."/>
            <person name="Vassarotti A."/>
            <person name="Viari A."/>
            <person name="Wambutt R."/>
            <person name="Wedler E."/>
            <person name="Wedler H."/>
            <person name="Weitzenegger T."/>
            <person name="Winters P."/>
            <person name="Wipat A."/>
            <person name="Yamamoto H."/>
            <person name="Yamane K."/>
            <person name="Yasumoto K."/>
            <person name="Yata K."/>
            <person name="Yoshida K."/>
            <person name="Yoshikawa H.-F."/>
            <person name="Zumstein E."/>
            <person name="Yoshikawa H."/>
            <person name="Danchin A."/>
        </authorList>
    </citation>
    <scope>NUCLEOTIDE SEQUENCE [LARGE SCALE GENOMIC DNA]</scope>
    <source>
        <strain>168</strain>
    </source>
</reference>
<sequence>MKKIFLAGLAAGFQTTWTLGKVIFPVTLLVTLLQHTPVMDWLVRLITPVMGLFGLSGEAAIPLVLGNMLNLYAGIAGILTLDLSVKEVFILAVMLSFCHNLIIESTVAAKVGIRIGVILAVRIGLAAVSAIVINLIWHGGKETAQYGFIAAKSAAPDSWLGMLAEALTKAGLGVLQLAAIVIPLMIIIQFLRDLGWLYRFSRWLSPFTQLLGMNKNTSMTMVTGLTIGLAYGAGVMIKAVEDDGVSKRDMTLAFIFLVACHAVVEDTLVFIPLGIPVWPLLLIRVTTAVLLTMAIAHTWKKWKPSAVGKEAI</sequence>
<proteinExistence type="predicted"/>
<feature type="chain" id="PRO_0000388800" description="Uncharacterized membrane protein YvoD">
    <location>
        <begin position="1"/>
        <end position="312"/>
    </location>
</feature>
<feature type="transmembrane region" description="Helical" evidence="1">
    <location>
        <begin position="4"/>
        <end position="24"/>
    </location>
</feature>
<feature type="transmembrane region" description="Helical" evidence="1">
    <location>
        <begin position="45"/>
        <end position="65"/>
    </location>
</feature>
<feature type="transmembrane region" description="Helical" evidence="1">
    <location>
        <begin position="75"/>
        <end position="95"/>
    </location>
</feature>
<feature type="transmembrane region" description="Helical" evidence="1">
    <location>
        <begin position="117"/>
        <end position="137"/>
    </location>
</feature>
<feature type="transmembrane region" description="Helical" evidence="1">
    <location>
        <begin position="171"/>
        <end position="191"/>
    </location>
</feature>
<feature type="transmembrane region" description="Helical" evidence="1">
    <location>
        <begin position="217"/>
        <end position="237"/>
    </location>
</feature>
<feature type="transmembrane region" description="Helical" evidence="1">
    <location>
        <begin position="253"/>
        <end position="275"/>
    </location>
</feature>
<feature type="transmembrane region" description="Helical" evidence="1">
    <location>
        <begin position="280"/>
        <end position="299"/>
    </location>
</feature>
<feature type="sequence conflict" description="In Ref. 1; AAD09502." evidence="2" ref="1">
    <original>L</original>
    <variation>M</variation>
    <location>
        <position position="204"/>
    </location>
</feature>
<feature type="sequence conflict" description="In Ref. 1; AAD09502." evidence="2" ref="1">
    <original>S</original>
    <variation>T</variation>
    <location>
        <position position="246"/>
    </location>
</feature>
<feature type="sequence conflict" description="In Ref. 1; AAD09502." evidence="2" ref="1">
    <original>I</original>
    <variation>M</variation>
    <location>
        <position position="255"/>
    </location>
</feature>